<sequence length="282" mass="31442">MIYETAPAKINFTLDTLFKRNDGYHEIEMIMTTVDLNDRLTFHKRKDRKIVVEIEHNYVPSNHKNLAYRAAQLFIEQYQLKQGVTISIDKEIPVSAGLAGGSADAAATLRGLNRLFDIGASLEELALLGSKIGTDIPFCIYNKTALCTGRGEKIEFLNKPPSAWVILAKPNLGISSPDIFKLINLDKRYDVHTKMCYEALENRDYQQLCQSLSNRLEPISVSKHPQIDKLKNNMLKSGADGALMSGSGPTVYGLARKESQAKNIYNAVNGCCNEVYLVRLLG</sequence>
<reference key="1">
    <citation type="journal article" date="2001" name="Lancet">
        <title>Whole genome sequencing of meticillin-resistant Staphylococcus aureus.</title>
        <authorList>
            <person name="Kuroda M."/>
            <person name="Ohta T."/>
            <person name="Uchiyama I."/>
            <person name="Baba T."/>
            <person name="Yuzawa H."/>
            <person name="Kobayashi I."/>
            <person name="Cui L."/>
            <person name="Oguchi A."/>
            <person name="Aoki K."/>
            <person name="Nagai Y."/>
            <person name="Lian J.-Q."/>
            <person name="Ito T."/>
            <person name="Kanamori M."/>
            <person name="Matsumaru H."/>
            <person name="Maruyama A."/>
            <person name="Murakami H."/>
            <person name="Hosoyama A."/>
            <person name="Mizutani-Ui Y."/>
            <person name="Takahashi N.K."/>
            <person name="Sawano T."/>
            <person name="Inoue R."/>
            <person name="Kaito C."/>
            <person name="Sekimizu K."/>
            <person name="Hirakawa H."/>
            <person name="Kuhara S."/>
            <person name="Goto S."/>
            <person name="Yabuzaki J."/>
            <person name="Kanehisa M."/>
            <person name="Yamashita A."/>
            <person name="Oshima K."/>
            <person name="Furuya K."/>
            <person name="Yoshino C."/>
            <person name="Shiba T."/>
            <person name="Hattori M."/>
            <person name="Ogasawara N."/>
            <person name="Hayashi H."/>
            <person name="Hiramatsu K."/>
        </authorList>
    </citation>
    <scope>NUCLEOTIDE SEQUENCE [LARGE SCALE GENOMIC DNA]</scope>
    <source>
        <strain>N315</strain>
    </source>
</reference>
<name>ISPE_STAAN</name>
<accession>P65181</accession>
<accession>Q99WA8</accession>
<evidence type="ECO:0000255" key="1">
    <source>
        <dbReference type="HAMAP-Rule" id="MF_00061"/>
    </source>
</evidence>
<proteinExistence type="inferred from homology"/>
<organism>
    <name type="scientific">Staphylococcus aureus (strain N315)</name>
    <dbReference type="NCBI Taxonomy" id="158879"/>
    <lineage>
        <taxon>Bacteria</taxon>
        <taxon>Bacillati</taxon>
        <taxon>Bacillota</taxon>
        <taxon>Bacilli</taxon>
        <taxon>Bacillales</taxon>
        <taxon>Staphylococcaceae</taxon>
        <taxon>Staphylococcus</taxon>
    </lineage>
</organism>
<keyword id="KW-0067">ATP-binding</keyword>
<keyword id="KW-0418">Kinase</keyword>
<keyword id="KW-0547">Nucleotide-binding</keyword>
<keyword id="KW-0808">Transferase</keyword>
<comment type="function">
    <text evidence="1">Catalyzes the phosphorylation of the position 2 hydroxy group of 4-diphosphocytidyl-2C-methyl-D-erythritol.</text>
</comment>
<comment type="catalytic activity">
    <reaction evidence="1">
        <text>4-CDP-2-C-methyl-D-erythritol + ATP = 4-CDP-2-C-methyl-D-erythritol 2-phosphate + ADP + H(+)</text>
        <dbReference type="Rhea" id="RHEA:18437"/>
        <dbReference type="ChEBI" id="CHEBI:15378"/>
        <dbReference type="ChEBI" id="CHEBI:30616"/>
        <dbReference type="ChEBI" id="CHEBI:57823"/>
        <dbReference type="ChEBI" id="CHEBI:57919"/>
        <dbReference type="ChEBI" id="CHEBI:456216"/>
        <dbReference type="EC" id="2.7.1.148"/>
    </reaction>
</comment>
<comment type="similarity">
    <text evidence="1">Belongs to the GHMP kinase family. IspE subfamily.</text>
</comment>
<dbReference type="EC" id="2.7.1.148" evidence="1"/>
<dbReference type="EMBL" id="BA000018">
    <property type="protein sequence ID" value="BAB41683.1"/>
    <property type="molecule type" value="Genomic_DNA"/>
</dbReference>
<dbReference type="PIR" id="H89815">
    <property type="entry name" value="H89815"/>
</dbReference>
<dbReference type="SMR" id="P65181"/>
<dbReference type="EnsemblBacteria" id="BAB41683">
    <property type="protein sequence ID" value="BAB41683"/>
    <property type="gene ID" value="BAB41683"/>
</dbReference>
<dbReference type="KEGG" id="sau:SA0453"/>
<dbReference type="HOGENOM" id="CLU_053057_1_1_9"/>
<dbReference type="GO" id="GO:0050515">
    <property type="term" value="F:4-(cytidine 5'-diphospho)-2-C-methyl-D-erythritol kinase activity"/>
    <property type="evidence" value="ECO:0007669"/>
    <property type="project" value="UniProtKB-UniRule"/>
</dbReference>
<dbReference type="GO" id="GO:0005524">
    <property type="term" value="F:ATP binding"/>
    <property type="evidence" value="ECO:0007669"/>
    <property type="project" value="UniProtKB-UniRule"/>
</dbReference>
<dbReference type="GO" id="GO:0016114">
    <property type="term" value="P:terpenoid biosynthetic process"/>
    <property type="evidence" value="ECO:0007669"/>
    <property type="project" value="InterPro"/>
</dbReference>
<dbReference type="FunFam" id="3.30.230.10:FF:000029">
    <property type="entry name" value="4-diphosphocytidyl-2-C-methyl-D-erythritol kinase"/>
    <property type="match status" value="1"/>
</dbReference>
<dbReference type="FunFam" id="3.30.70.890:FF:000006">
    <property type="entry name" value="4-diphosphocytidyl-2-C-methyl-D-erythritol kinase"/>
    <property type="match status" value="1"/>
</dbReference>
<dbReference type="Gene3D" id="3.30.230.10">
    <property type="match status" value="1"/>
</dbReference>
<dbReference type="Gene3D" id="3.30.70.890">
    <property type="entry name" value="GHMP kinase, C-terminal domain"/>
    <property type="match status" value="1"/>
</dbReference>
<dbReference type="HAMAP" id="MF_00061">
    <property type="entry name" value="IspE"/>
    <property type="match status" value="1"/>
</dbReference>
<dbReference type="InterPro" id="IPR013750">
    <property type="entry name" value="GHMP_kinase_C_dom"/>
</dbReference>
<dbReference type="InterPro" id="IPR036554">
    <property type="entry name" value="GHMP_kinase_C_sf"/>
</dbReference>
<dbReference type="InterPro" id="IPR006204">
    <property type="entry name" value="GHMP_kinase_N_dom"/>
</dbReference>
<dbReference type="InterPro" id="IPR004424">
    <property type="entry name" value="IspE"/>
</dbReference>
<dbReference type="InterPro" id="IPR020568">
    <property type="entry name" value="Ribosomal_Su5_D2-typ_SF"/>
</dbReference>
<dbReference type="InterPro" id="IPR014721">
    <property type="entry name" value="Ribsml_uS5_D2-typ_fold_subgr"/>
</dbReference>
<dbReference type="NCBIfam" id="TIGR00154">
    <property type="entry name" value="ispE"/>
    <property type="match status" value="1"/>
</dbReference>
<dbReference type="PANTHER" id="PTHR43527">
    <property type="entry name" value="4-DIPHOSPHOCYTIDYL-2-C-METHYL-D-ERYTHRITOL KINASE, CHLOROPLASTIC"/>
    <property type="match status" value="1"/>
</dbReference>
<dbReference type="PANTHER" id="PTHR43527:SF2">
    <property type="entry name" value="4-DIPHOSPHOCYTIDYL-2-C-METHYL-D-ERYTHRITOL KINASE, CHLOROPLASTIC"/>
    <property type="match status" value="1"/>
</dbReference>
<dbReference type="Pfam" id="PF08544">
    <property type="entry name" value="GHMP_kinases_C"/>
    <property type="match status" value="1"/>
</dbReference>
<dbReference type="Pfam" id="PF00288">
    <property type="entry name" value="GHMP_kinases_N"/>
    <property type="match status" value="1"/>
</dbReference>
<dbReference type="PIRSF" id="PIRSF010376">
    <property type="entry name" value="IspE"/>
    <property type="match status" value="1"/>
</dbReference>
<dbReference type="SUPFAM" id="SSF55060">
    <property type="entry name" value="GHMP Kinase, C-terminal domain"/>
    <property type="match status" value="1"/>
</dbReference>
<dbReference type="SUPFAM" id="SSF54211">
    <property type="entry name" value="Ribosomal protein S5 domain 2-like"/>
    <property type="match status" value="1"/>
</dbReference>
<protein>
    <recommendedName>
        <fullName evidence="1">Putative 4-diphosphocytidyl-2-C-methyl-D-erythritol kinase</fullName>
        <shortName evidence="1">CMK</shortName>
        <ecNumber evidence="1">2.7.1.148</ecNumber>
    </recommendedName>
    <alternativeName>
        <fullName evidence="1">4-(cytidine-5'-diphospho)-2-C-methyl-D-erythritol kinase</fullName>
    </alternativeName>
</protein>
<feature type="chain" id="PRO_0000189263" description="Putative 4-diphosphocytidyl-2-C-methyl-D-erythritol kinase">
    <location>
        <begin position="1"/>
        <end position="282"/>
    </location>
</feature>
<feature type="active site" evidence="1">
    <location>
        <position position="9"/>
    </location>
</feature>
<feature type="active site" evidence="1">
    <location>
        <position position="135"/>
    </location>
</feature>
<feature type="binding site" evidence="1">
    <location>
        <begin position="93"/>
        <end position="103"/>
    </location>
    <ligand>
        <name>ATP</name>
        <dbReference type="ChEBI" id="CHEBI:30616"/>
    </ligand>
</feature>
<gene>
    <name type="ordered locus">SA0453</name>
</gene>